<accession>Q75B95</accession>
<keyword id="KW-0507">mRNA processing</keyword>
<keyword id="KW-0508">mRNA splicing</keyword>
<keyword id="KW-0539">Nucleus</keyword>
<keyword id="KW-1185">Reference proteome</keyword>
<keyword id="KW-0747">Spliceosome</keyword>
<dbReference type="EMBL" id="AE016817">
    <property type="protein sequence ID" value="AAS51595.1"/>
    <property type="molecule type" value="Genomic_DNA"/>
</dbReference>
<dbReference type="RefSeq" id="NP_983771.1">
    <property type="nucleotide sequence ID" value="NM_209124.1"/>
</dbReference>
<dbReference type="SMR" id="Q75B95"/>
<dbReference type="FunCoup" id="Q75B95">
    <property type="interactions" value="129"/>
</dbReference>
<dbReference type="STRING" id="284811.Q75B95"/>
<dbReference type="EnsemblFungi" id="AAS51595">
    <property type="protein sequence ID" value="AAS51595"/>
    <property type="gene ID" value="AGOS_ADL325C"/>
</dbReference>
<dbReference type="GeneID" id="4619906"/>
<dbReference type="KEGG" id="ago:AGOS_ADL325C"/>
<dbReference type="eggNOG" id="ENOG502S02X">
    <property type="taxonomic scope" value="Eukaryota"/>
</dbReference>
<dbReference type="HOGENOM" id="CLU_748374_0_0_1"/>
<dbReference type="InParanoid" id="Q75B95"/>
<dbReference type="OMA" id="NEPSHSI"/>
<dbReference type="OrthoDB" id="428895at2759"/>
<dbReference type="Proteomes" id="UP000000591">
    <property type="component" value="Chromosome IV"/>
</dbReference>
<dbReference type="GO" id="GO:0030532">
    <property type="term" value="C:small nuclear ribonucleoprotein complex"/>
    <property type="evidence" value="ECO:0007669"/>
    <property type="project" value="InterPro"/>
</dbReference>
<dbReference type="GO" id="GO:0005681">
    <property type="term" value="C:spliceosomal complex"/>
    <property type="evidence" value="ECO:0007669"/>
    <property type="project" value="UniProtKB-KW"/>
</dbReference>
<dbReference type="GO" id="GO:0000387">
    <property type="term" value="P:spliceosomal snRNP assembly"/>
    <property type="evidence" value="ECO:0007669"/>
    <property type="project" value="InterPro"/>
</dbReference>
<dbReference type="Gene3D" id="1.20.58.1070">
    <property type="match status" value="1"/>
</dbReference>
<dbReference type="InterPro" id="IPR023251">
    <property type="entry name" value="Brr1"/>
</dbReference>
<dbReference type="InterPro" id="IPR035426">
    <property type="entry name" value="Gemin2/Brr1"/>
</dbReference>
<dbReference type="Pfam" id="PF04938">
    <property type="entry name" value="SIP1"/>
    <property type="match status" value="1"/>
</dbReference>
<dbReference type="PRINTS" id="PR02039">
    <property type="entry name" value="SPLICEFRBRR1"/>
</dbReference>
<name>BRR1_EREGS</name>
<organism>
    <name type="scientific">Eremothecium gossypii (strain ATCC 10895 / CBS 109.51 / FGSC 9923 / NRRL Y-1056)</name>
    <name type="common">Yeast</name>
    <name type="synonym">Ashbya gossypii</name>
    <dbReference type="NCBI Taxonomy" id="284811"/>
    <lineage>
        <taxon>Eukaryota</taxon>
        <taxon>Fungi</taxon>
        <taxon>Dikarya</taxon>
        <taxon>Ascomycota</taxon>
        <taxon>Saccharomycotina</taxon>
        <taxon>Saccharomycetes</taxon>
        <taxon>Saccharomycetales</taxon>
        <taxon>Saccharomycetaceae</taxon>
        <taxon>Eremothecium</taxon>
    </lineage>
</organism>
<comment type="function">
    <text evidence="1">Involved in mRNA splicing. Required for snRNA accumulation and manufacture of snRNPs (By similarity).</text>
</comment>
<comment type="subcellular location">
    <subcellularLocation>
        <location evidence="1">Nucleus</location>
    </subcellularLocation>
</comment>
<comment type="similarity">
    <text evidence="2">Belongs to the BRR1 family.</text>
</comment>
<protein>
    <recommendedName>
        <fullName>Pre-mRNA-splicing factor BRR1</fullName>
    </recommendedName>
</protein>
<reference key="1">
    <citation type="journal article" date="2004" name="Science">
        <title>The Ashbya gossypii genome as a tool for mapping the ancient Saccharomyces cerevisiae genome.</title>
        <authorList>
            <person name="Dietrich F.S."/>
            <person name="Voegeli S."/>
            <person name="Brachat S."/>
            <person name="Lerch A."/>
            <person name="Gates K."/>
            <person name="Steiner S."/>
            <person name="Mohr C."/>
            <person name="Poehlmann R."/>
            <person name="Luedi P."/>
            <person name="Choi S."/>
            <person name="Wing R.A."/>
            <person name="Flavier A."/>
            <person name="Gaffney T.D."/>
            <person name="Philippsen P."/>
        </authorList>
    </citation>
    <scope>NUCLEOTIDE SEQUENCE [LARGE SCALE GENOMIC DNA]</scope>
    <source>
        <strain>ATCC 10895 / CBS 109.51 / FGSC 9923 / NRRL Y-1056</strain>
    </source>
</reference>
<reference key="2">
    <citation type="journal article" date="2013" name="G3 (Bethesda)">
        <title>Genomes of Ashbya fungi isolated from insects reveal four mating-type loci, numerous translocations, lack of transposons, and distinct gene duplications.</title>
        <authorList>
            <person name="Dietrich F.S."/>
            <person name="Voegeli S."/>
            <person name="Kuo S."/>
            <person name="Philippsen P."/>
        </authorList>
    </citation>
    <scope>GENOME REANNOTATION</scope>
    <source>
        <strain>ATCC 10895 / CBS 109.51 / FGSC 9923 / NRRL Y-1056</strain>
    </source>
</reference>
<sequence length="322" mass="36701">MGHTSGPVDPVFGQCQVFDCSAAEVNPEVVKYLAHVRDEALHTVGVVPSASNLRKRKIEISYDDEEVVKRPSEGEKAIELPFDMDEVISWFDQVKEDALSEREAFEGYDEETLNTLLVGIRDYISRMSSRDESTNNLIKLLEGVQPVVTNEALELDEKWAAKLVARLGRRKFTTLDNLKLRLNTQLPIPTRAKAWKIHIPINEPSHEFFHRMNSTQLFDLLRYLTDNIVEHYQTDSATDYGQWLVYLLLHLPRQLTANEISEVRGLSKKVRALIIDHEILKLPMLLPSEIEDVSPIPRGVNPLHLALAVVAVIYGQRDILFL</sequence>
<gene>
    <name type="primary">BRR1</name>
    <name type="ordered locus">ADL325C</name>
</gene>
<feature type="chain" id="PRO_0000239635" description="Pre-mRNA-splicing factor BRR1">
    <location>
        <begin position="1"/>
        <end position="322"/>
    </location>
</feature>
<evidence type="ECO:0000250" key="1"/>
<evidence type="ECO:0000305" key="2"/>
<proteinExistence type="inferred from homology"/>